<protein>
    <recommendedName>
        <fullName evidence="1">Probable succinate transporter subunit YjjB</fullName>
    </recommendedName>
</protein>
<evidence type="ECO:0000255" key="1">
    <source>
        <dbReference type="HAMAP-Rule" id="MF_01191"/>
    </source>
</evidence>
<comment type="function">
    <text evidence="1">Involved in succinate export with YjjP. Both proteins are required for export.</text>
</comment>
<comment type="subunit">
    <text evidence="1">The transporter is composed of YjjB and YjjP.</text>
</comment>
<comment type="subcellular location">
    <subcellularLocation>
        <location evidence="1">Cell inner membrane</location>
        <topology evidence="1">Multi-pass membrane protein</topology>
    </subcellularLocation>
</comment>
<comment type="similarity">
    <text evidence="1">Belongs to the ThrE exporter (TC 2.A.79) family.</text>
</comment>
<sequence>MGIIDFFMALMQDMILSAIPAVGFAMVFNVPHRALPWCALLGALGHGSRMLMMSAGFNIEWSTFMASLLVGSIGIQWSRWYLAHPKVFTVAAVIPMFPGISAYTAMISAVKISHLGYSEPMMITLLTNFLKASSIVGALSIGLSVPGLWLYRKRPRV</sequence>
<dbReference type="EMBL" id="CP000880">
    <property type="protein sequence ID" value="ABX22876.1"/>
    <property type="molecule type" value="Genomic_DNA"/>
</dbReference>
<dbReference type="STRING" id="41514.SARI_03035"/>
<dbReference type="KEGG" id="ses:SARI_03035"/>
<dbReference type="HOGENOM" id="CLU_117642_1_0_6"/>
<dbReference type="Proteomes" id="UP000002084">
    <property type="component" value="Chromosome"/>
</dbReference>
<dbReference type="GO" id="GO:0005886">
    <property type="term" value="C:plasma membrane"/>
    <property type="evidence" value="ECO:0007669"/>
    <property type="project" value="UniProtKB-SubCell"/>
</dbReference>
<dbReference type="GO" id="GO:0015744">
    <property type="term" value="P:succinate transport"/>
    <property type="evidence" value="ECO:0007669"/>
    <property type="project" value="UniProtKB-UniRule"/>
</dbReference>
<dbReference type="HAMAP" id="MF_01191">
    <property type="entry name" value="YjjB"/>
    <property type="match status" value="1"/>
</dbReference>
<dbReference type="InterPro" id="IPR024528">
    <property type="entry name" value="ThrE_2"/>
</dbReference>
<dbReference type="InterPro" id="IPR050539">
    <property type="entry name" value="ThrE_Dicarb/AminoAcid_Exp"/>
</dbReference>
<dbReference type="InterPro" id="IPR020914">
    <property type="entry name" value="YjjB"/>
</dbReference>
<dbReference type="NCBIfam" id="NF007391">
    <property type="entry name" value="PRK09917.1"/>
    <property type="match status" value="1"/>
</dbReference>
<dbReference type="PANTHER" id="PTHR34390:SF1">
    <property type="entry name" value="SUCCINATE TRANSPORTER SUBUNIT YJJB-RELATED"/>
    <property type="match status" value="1"/>
</dbReference>
<dbReference type="PANTHER" id="PTHR34390">
    <property type="entry name" value="UPF0442 PROTEIN YJJB-RELATED"/>
    <property type="match status" value="1"/>
</dbReference>
<dbReference type="Pfam" id="PF12821">
    <property type="entry name" value="ThrE_2"/>
    <property type="match status" value="1"/>
</dbReference>
<accession>A9MRX4</accession>
<keyword id="KW-0997">Cell inner membrane</keyword>
<keyword id="KW-1003">Cell membrane</keyword>
<keyword id="KW-0472">Membrane</keyword>
<keyword id="KW-1185">Reference proteome</keyword>
<keyword id="KW-0812">Transmembrane</keyword>
<keyword id="KW-1133">Transmembrane helix</keyword>
<keyword id="KW-0813">Transport</keyword>
<feature type="chain" id="PRO_1000085473" description="Probable succinate transporter subunit YjjB">
    <location>
        <begin position="1"/>
        <end position="157"/>
    </location>
</feature>
<feature type="transmembrane region" description="Helical" evidence="1">
    <location>
        <begin position="6"/>
        <end position="26"/>
    </location>
</feature>
<feature type="transmembrane region" description="Helical" evidence="1">
    <location>
        <begin position="55"/>
        <end position="75"/>
    </location>
</feature>
<feature type="transmembrane region" description="Helical" evidence="1">
    <location>
        <begin position="87"/>
        <end position="107"/>
    </location>
</feature>
<feature type="transmembrane region" description="Helical" evidence="1">
    <location>
        <begin position="129"/>
        <end position="149"/>
    </location>
</feature>
<proteinExistence type="inferred from homology"/>
<organism>
    <name type="scientific">Salmonella arizonae (strain ATCC BAA-731 / CDC346-86 / RSK2980)</name>
    <dbReference type="NCBI Taxonomy" id="41514"/>
    <lineage>
        <taxon>Bacteria</taxon>
        <taxon>Pseudomonadati</taxon>
        <taxon>Pseudomonadota</taxon>
        <taxon>Gammaproteobacteria</taxon>
        <taxon>Enterobacterales</taxon>
        <taxon>Enterobacteriaceae</taxon>
        <taxon>Salmonella</taxon>
    </lineage>
</organism>
<name>YJJB_SALAR</name>
<gene>
    <name evidence="1" type="primary">yjjB</name>
    <name type="ordered locus">SARI_03035</name>
</gene>
<reference key="1">
    <citation type="submission" date="2007-11" db="EMBL/GenBank/DDBJ databases">
        <authorList>
            <consortium name="The Salmonella enterica serovar Arizonae Genome Sequencing Project"/>
            <person name="McClelland M."/>
            <person name="Sanderson E.K."/>
            <person name="Porwollik S."/>
            <person name="Spieth J."/>
            <person name="Clifton W.S."/>
            <person name="Fulton R."/>
            <person name="Chunyan W."/>
            <person name="Wollam A."/>
            <person name="Shah N."/>
            <person name="Pepin K."/>
            <person name="Bhonagiri V."/>
            <person name="Nash W."/>
            <person name="Johnson M."/>
            <person name="Thiruvilangam P."/>
            <person name="Wilson R."/>
        </authorList>
    </citation>
    <scope>NUCLEOTIDE SEQUENCE [LARGE SCALE GENOMIC DNA]</scope>
    <source>
        <strain>ATCC BAA-731 / CDC346-86 / RSK2980</strain>
    </source>
</reference>